<evidence type="ECO:0000255" key="1">
    <source>
        <dbReference type="HAMAP-Rule" id="MF_00072"/>
    </source>
</evidence>
<reference key="1">
    <citation type="journal article" date="2007" name="PLoS Genet.">
        <title>Meningococcal genetic variation mechanisms viewed through comparative analysis of serogroup C strain FAM18.</title>
        <authorList>
            <person name="Bentley S.D."/>
            <person name="Vernikos G.S."/>
            <person name="Snyder L.A.S."/>
            <person name="Churcher C."/>
            <person name="Arrowsmith C."/>
            <person name="Chillingworth T."/>
            <person name="Cronin A."/>
            <person name="Davis P.H."/>
            <person name="Holroyd N.E."/>
            <person name="Jagels K."/>
            <person name="Maddison M."/>
            <person name="Moule S."/>
            <person name="Rabbinowitsch E."/>
            <person name="Sharp S."/>
            <person name="Unwin L."/>
            <person name="Whitehead S."/>
            <person name="Quail M.A."/>
            <person name="Achtman M."/>
            <person name="Barrell B.G."/>
            <person name="Saunders N.J."/>
            <person name="Parkhill J."/>
        </authorList>
    </citation>
    <scope>NUCLEOTIDE SEQUENCE [LARGE SCALE GENOMIC DNA]</scope>
    <source>
        <strain>ATCC 700532 / DSM 15464 / FAM18</strain>
    </source>
</reference>
<name>RF3_NEIMF</name>
<comment type="function">
    <text evidence="1">Increases the formation of ribosomal termination complexes and stimulates activities of RF-1 and RF-2. It binds guanine nucleotides and has strong preference for UGA stop codons. It may interact directly with the ribosome. The stimulation of RF-1 and RF-2 is significantly reduced by GTP and GDP, but not by GMP.</text>
</comment>
<comment type="subcellular location">
    <subcellularLocation>
        <location evidence="1">Cytoplasm</location>
    </subcellularLocation>
</comment>
<comment type="similarity">
    <text evidence="1">Belongs to the TRAFAC class translation factor GTPase superfamily. Classic translation factor GTPase family. PrfC subfamily.</text>
</comment>
<protein>
    <recommendedName>
        <fullName evidence="1">Peptide chain release factor 3</fullName>
        <shortName evidence="1">RF-3</shortName>
    </recommendedName>
</protein>
<proteinExistence type="inferred from homology"/>
<organism>
    <name type="scientific">Neisseria meningitidis serogroup C / serotype 2a (strain ATCC 700532 / DSM 15464 / FAM18)</name>
    <dbReference type="NCBI Taxonomy" id="272831"/>
    <lineage>
        <taxon>Bacteria</taxon>
        <taxon>Pseudomonadati</taxon>
        <taxon>Pseudomonadota</taxon>
        <taxon>Betaproteobacteria</taxon>
        <taxon>Neisseriales</taxon>
        <taxon>Neisseriaceae</taxon>
        <taxon>Neisseria</taxon>
    </lineage>
</organism>
<sequence>MSQEILDQVRRRRTFAIISHPDAGKTTLTEKLLLFSGAIQSAGTVKGKKTGKFATSDWMDIEKQRGISVASSVMQFDYKDHTVNLLDTPGHQDFSEDTYRVLTAVDSALMVIDAAKGVEAQTIKLLNVCRLRDTPIVTFMNKYDREVRDSLELLDEVENILQIRCAPVTWPIGMGKNFKGVYHILNDEIYLFEAGGERLPHEFDIIKGIDNPELEQRFPLEIQQLRDEIELVQAASNEFNLDEFLAGELTPVFFGSAINNFGIQEILNSLIDWAPAPKPRDATVRMVEPDEAKFSGFIFKIQANMDPKHRDRIAFLRVCSGKFERGMKMKHLRINREIAASSVVTFMSHDRELVEEAYAGDIIGIPNHGNIQIGDSFSEGEQLAFTGIPFFAPELFRSVRIKNPLKIKQLQKGLQQLGEEGAVQVFKPMSGADLILGAVGVLQFEVVTSRLANEYGVEAVFDSASIWSARWVSCDDKKKLAEFEKANAGNLAIDAGGNLAYLAPNRVNLGLTQERWPDIVFHETREHSVKL</sequence>
<keyword id="KW-0963">Cytoplasm</keyword>
<keyword id="KW-0342">GTP-binding</keyword>
<keyword id="KW-0547">Nucleotide-binding</keyword>
<keyword id="KW-0648">Protein biosynthesis</keyword>
<dbReference type="EMBL" id="AM421808">
    <property type="protein sequence ID" value="CAM09864.1"/>
    <property type="molecule type" value="Genomic_DNA"/>
</dbReference>
<dbReference type="RefSeq" id="WP_002221322.1">
    <property type="nucleotide sequence ID" value="NC_008767.1"/>
</dbReference>
<dbReference type="SMR" id="A1KSN4"/>
<dbReference type="KEGG" id="nmc:NMC0570"/>
<dbReference type="HOGENOM" id="CLU_002794_2_1_4"/>
<dbReference type="Proteomes" id="UP000002286">
    <property type="component" value="Chromosome"/>
</dbReference>
<dbReference type="GO" id="GO:0005829">
    <property type="term" value="C:cytosol"/>
    <property type="evidence" value="ECO:0007669"/>
    <property type="project" value="TreeGrafter"/>
</dbReference>
<dbReference type="GO" id="GO:0005525">
    <property type="term" value="F:GTP binding"/>
    <property type="evidence" value="ECO:0007669"/>
    <property type="project" value="UniProtKB-UniRule"/>
</dbReference>
<dbReference type="GO" id="GO:0003924">
    <property type="term" value="F:GTPase activity"/>
    <property type="evidence" value="ECO:0007669"/>
    <property type="project" value="InterPro"/>
</dbReference>
<dbReference type="GO" id="GO:0016150">
    <property type="term" value="F:translation release factor activity, codon nonspecific"/>
    <property type="evidence" value="ECO:0007669"/>
    <property type="project" value="TreeGrafter"/>
</dbReference>
<dbReference type="GO" id="GO:0016149">
    <property type="term" value="F:translation release factor activity, codon specific"/>
    <property type="evidence" value="ECO:0007669"/>
    <property type="project" value="UniProtKB-UniRule"/>
</dbReference>
<dbReference type="GO" id="GO:0006449">
    <property type="term" value="P:regulation of translational termination"/>
    <property type="evidence" value="ECO:0007669"/>
    <property type="project" value="UniProtKB-UniRule"/>
</dbReference>
<dbReference type="CDD" id="cd04169">
    <property type="entry name" value="RF3"/>
    <property type="match status" value="1"/>
</dbReference>
<dbReference type="CDD" id="cd03689">
    <property type="entry name" value="RF3_II"/>
    <property type="match status" value="1"/>
</dbReference>
<dbReference type="CDD" id="cd16259">
    <property type="entry name" value="RF3_III"/>
    <property type="match status" value="1"/>
</dbReference>
<dbReference type="FunFam" id="2.40.30.10:FF:000040">
    <property type="entry name" value="Peptide chain release factor 3"/>
    <property type="match status" value="1"/>
</dbReference>
<dbReference type="FunFam" id="3.30.70.3280:FF:000001">
    <property type="entry name" value="Peptide chain release factor 3"/>
    <property type="match status" value="1"/>
</dbReference>
<dbReference type="FunFam" id="3.40.50.300:FF:000542">
    <property type="entry name" value="Peptide chain release factor 3"/>
    <property type="match status" value="1"/>
</dbReference>
<dbReference type="Gene3D" id="3.40.50.300">
    <property type="entry name" value="P-loop containing nucleotide triphosphate hydrolases"/>
    <property type="match status" value="2"/>
</dbReference>
<dbReference type="Gene3D" id="3.30.70.3280">
    <property type="entry name" value="Peptide chain release factor 3, domain III"/>
    <property type="match status" value="1"/>
</dbReference>
<dbReference type="HAMAP" id="MF_00072">
    <property type="entry name" value="Rel_fac_3"/>
    <property type="match status" value="1"/>
</dbReference>
<dbReference type="InterPro" id="IPR053905">
    <property type="entry name" value="EF-G-like_DII"/>
</dbReference>
<dbReference type="InterPro" id="IPR035647">
    <property type="entry name" value="EFG_III/V"/>
</dbReference>
<dbReference type="InterPro" id="IPR031157">
    <property type="entry name" value="G_TR_CS"/>
</dbReference>
<dbReference type="InterPro" id="IPR027417">
    <property type="entry name" value="P-loop_NTPase"/>
</dbReference>
<dbReference type="InterPro" id="IPR004548">
    <property type="entry name" value="PrfC"/>
</dbReference>
<dbReference type="InterPro" id="IPR032090">
    <property type="entry name" value="RF3_C"/>
</dbReference>
<dbReference type="InterPro" id="IPR038467">
    <property type="entry name" value="RF3_dom_3_sf"/>
</dbReference>
<dbReference type="InterPro" id="IPR041732">
    <property type="entry name" value="RF3_GTP-bd"/>
</dbReference>
<dbReference type="InterPro" id="IPR005225">
    <property type="entry name" value="Small_GTP-bd"/>
</dbReference>
<dbReference type="InterPro" id="IPR000795">
    <property type="entry name" value="T_Tr_GTP-bd_dom"/>
</dbReference>
<dbReference type="InterPro" id="IPR009000">
    <property type="entry name" value="Transl_B-barrel_sf"/>
</dbReference>
<dbReference type="NCBIfam" id="TIGR00503">
    <property type="entry name" value="prfC"/>
    <property type="match status" value="1"/>
</dbReference>
<dbReference type="NCBIfam" id="NF001964">
    <property type="entry name" value="PRK00741.1"/>
    <property type="match status" value="1"/>
</dbReference>
<dbReference type="NCBIfam" id="TIGR00231">
    <property type="entry name" value="small_GTP"/>
    <property type="match status" value="1"/>
</dbReference>
<dbReference type="PANTHER" id="PTHR43556">
    <property type="entry name" value="PEPTIDE CHAIN RELEASE FACTOR RF3"/>
    <property type="match status" value="1"/>
</dbReference>
<dbReference type="PANTHER" id="PTHR43556:SF2">
    <property type="entry name" value="PEPTIDE CHAIN RELEASE FACTOR RF3"/>
    <property type="match status" value="1"/>
</dbReference>
<dbReference type="Pfam" id="PF22042">
    <property type="entry name" value="EF-G_D2"/>
    <property type="match status" value="1"/>
</dbReference>
<dbReference type="Pfam" id="PF00009">
    <property type="entry name" value="GTP_EFTU"/>
    <property type="match status" value="1"/>
</dbReference>
<dbReference type="Pfam" id="PF16658">
    <property type="entry name" value="RF3_C"/>
    <property type="match status" value="1"/>
</dbReference>
<dbReference type="PRINTS" id="PR00315">
    <property type="entry name" value="ELONGATNFCT"/>
</dbReference>
<dbReference type="SUPFAM" id="SSF54980">
    <property type="entry name" value="EF-G C-terminal domain-like"/>
    <property type="match status" value="1"/>
</dbReference>
<dbReference type="SUPFAM" id="SSF52540">
    <property type="entry name" value="P-loop containing nucleoside triphosphate hydrolases"/>
    <property type="match status" value="1"/>
</dbReference>
<dbReference type="SUPFAM" id="SSF50447">
    <property type="entry name" value="Translation proteins"/>
    <property type="match status" value="1"/>
</dbReference>
<dbReference type="PROSITE" id="PS00301">
    <property type="entry name" value="G_TR_1"/>
    <property type="match status" value="1"/>
</dbReference>
<dbReference type="PROSITE" id="PS51722">
    <property type="entry name" value="G_TR_2"/>
    <property type="match status" value="1"/>
</dbReference>
<feature type="chain" id="PRO_1000023662" description="Peptide chain release factor 3">
    <location>
        <begin position="1"/>
        <end position="531"/>
    </location>
</feature>
<feature type="domain" description="tr-type G">
    <location>
        <begin position="10"/>
        <end position="278"/>
    </location>
</feature>
<feature type="binding site" evidence="1">
    <location>
        <begin position="19"/>
        <end position="26"/>
    </location>
    <ligand>
        <name>GTP</name>
        <dbReference type="ChEBI" id="CHEBI:37565"/>
    </ligand>
</feature>
<feature type="binding site" evidence="1">
    <location>
        <begin position="87"/>
        <end position="91"/>
    </location>
    <ligand>
        <name>GTP</name>
        <dbReference type="ChEBI" id="CHEBI:37565"/>
    </ligand>
</feature>
<feature type="binding site" evidence="1">
    <location>
        <begin position="141"/>
        <end position="144"/>
    </location>
    <ligand>
        <name>GTP</name>
        <dbReference type="ChEBI" id="CHEBI:37565"/>
    </ligand>
</feature>
<gene>
    <name evidence="1" type="primary">prfC</name>
    <name type="ordered locus">NMC0570</name>
</gene>
<accession>A1KSN4</accession>